<sequence>MNSLNNLRTNNPLVICYTNDVVKNFTANGLLSLGASPAMSQAPEEAIDMLTPANALLINIGTLTKDREQDILEIAKTANEVGTPIVFDPVAVGASQYRKDFCKTFLNTVDVVVIKGNASEILALINNDAKMKGTDSDDNLNAIEIAKEAHKRLNSAIIITGKEDVVIQDNQIYQLNNGSALLAKVTGAGCLLGAVIASFLPTDETTSISQLVEATSIYNIAAEKAEQLAEDKGPGTFMTLLLDALYQVTYDDYSNQSDIQEVQ</sequence>
<organism>
    <name type="scientific">Staphylococcus saprophyticus subsp. saprophyticus (strain ATCC 15305 / DSM 20229 / NCIMB 8711 / NCTC 7292 / S-41)</name>
    <dbReference type="NCBI Taxonomy" id="342451"/>
    <lineage>
        <taxon>Bacteria</taxon>
        <taxon>Bacillati</taxon>
        <taxon>Bacillota</taxon>
        <taxon>Bacilli</taxon>
        <taxon>Bacillales</taxon>
        <taxon>Staphylococcaceae</taxon>
        <taxon>Staphylococcus</taxon>
    </lineage>
</organism>
<reference key="1">
    <citation type="journal article" date="2005" name="Proc. Natl. Acad. Sci. U.S.A.">
        <title>Whole genome sequence of Staphylococcus saprophyticus reveals the pathogenesis of uncomplicated urinary tract infection.</title>
        <authorList>
            <person name="Kuroda M."/>
            <person name="Yamashita A."/>
            <person name="Hirakawa H."/>
            <person name="Kumano M."/>
            <person name="Morikawa K."/>
            <person name="Higashide M."/>
            <person name="Maruyama A."/>
            <person name="Inose Y."/>
            <person name="Matoba K."/>
            <person name="Toh H."/>
            <person name="Kuhara S."/>
            <person name="Hattori M."/>
            <person name="Ohta T."/>
        </authorList>
    </citation>
    <scope>NUCLEOTIDE SEQUENCE [LARGE SCALE GENOMIC DNA]</scope>
    <source>
        <strain>ATCC 15305 / DSM 20229 / NCIMB 8711 / NCTC 7292 / S-41</strain>
    </source>
</reference>
<protein>
    <recommendedName>
        <fullName evidence="1">Hydroxyethylthiazole kinase</fullName>
        <ecNumber evidence="1">2.7.1.50</ecNumber>
    </recommendedName>
    <alternativeName>
        <fullName evidence="1">4-methyl-5-beta-hydroxyethylthiazole kinase</fullName>
        <shortName evidence="1">TH kinase</shortName>
        <shortName evidence="1">Thz kinase</shortName>
    </alternativeName>
</protein>
<name>THIM_STAS1</name>
<gene>
    <name evidence="1" type="primary">thiM</name>
    <name type="ordered locus">SSP0791</name>
</gene>
<proteinExistence type="inferred from homology"/>
<comment type="function">
    <text evidence="1">Catalyzes the phosphorylation of the hydroxyl group of 4-methyl-5-beta-hydroxyethylthiazole (THZ).</text>
</comment>
<comment type="catalytic activity">
    <reaction evidence="1">
        <text>5-(2-hydroxyethyl)-4-methylthiazole + ATP = 4-methyl-5-(2-phosphooxyethyl)-thiazole + ADP + H(+)</text>
        <dbReference type="Rhea" id="RHEA:24212"/>
        <dbReference type="ChEBI" id="CHEBI:15378"/>
        <dbReference type="ChEBI" id="CHEBI:17957"/>
        <dbReference type="ChEBI" id="CHEBI:30616"/>
        <dbReference type="ChEBI" id="CHEBI:58296"/>
        <dbReference type="ChEBI" id="CHEBI:456216"/>
        <dbReference type="EC" id="2.7.1.50"/>
    </reaction>
</comment>
<comment type="cofactor">
    <cofactor evidence="1">
        <name>Mg(2+)</name>
        <dbReference type="ChEBI" id="CHEBI:18420"/>
    </cofactor>
</comment>
<comment type="pathway">
    <text evidence="1">Cofactor biosynthesis; thiamine diphosphate biosynthesis; 4-methyl-5-(2-phosphoethyl)-thiazole from 5-(2-hydroxyethyl)-4-methylthiazole: step 1/1.</text>
</comment>
<comment type="similarity">
    <text evidence="1">Belongs to the Thz kinase family.</text>
</comment>
<accession>Q49Z40</accession>
<dbReference type="EC" id="2.7.1.50" evidence="1"/>
<dbReference type="EMBL" id="AP008934">
    <property type="protein sequence ID" value="BAE17936.1"/>
    <property type="molecule type" value="Genomic_DNA"/>
</dbReference>
<dbReference type="RefSeq" id="WP_011302688.1">
    <property type="nucleotide sequence ID" value="NC_007350.1"/>
</dbReference>
<dbReference type="SMR" id="Q49Z40"/>
<dbReference type="GeneID" id="3615758"/>
<dbReference type="KEGG" id="ssp:SSP0791"/>
<dbReference type="PATRIC" id="fig|342451.11.peg.793"/>
<dbReference type="eggNOG" id="COG2145">
    <property type="taxonomic scope" value="Bacteria"/>
</dbReference>
<dbReference type="HOGENOM" id="CLU_019943_0_2_9"/>
<dbReference type="OrthoDB" id="9778146at2"/>
<dbReference type="UniPathway" id="UPA00060">
    <property type="reaction ID" value="UER00139"/>
</dbReference>
<dbReference type="Proteomes" id="UP000006371">
    <property type="component" value="Chromosome"/>
</dbReference>
<dbReference type="GO" id="GO:0005524">
    <property type="term" value="F:ATP binding"/>
    <property type="evidence" value="ECO:0007669"/>
    <property type="project" value="UniProtKB-UniRule"/>
</dbReference>
<dbReference type="GO" id="GO:0004417">
    <property type="term" value="F:hydroxyethylthiazole kinase activity"/>
    <property type="evidence" value="ECO:0007669"/>
    <property type="project" value="UniProtKB-UniRule"/>
</dbReference>
<dbReference type="GO" id="GO:0000287">
    <property type="term" value="F:magnesium ion binding"/>
    <property type="evidence" value="ECO:0007669"/>
    <property type="project" value="UniProtKB-UniRule"/>
</dbReference>
<dbReference type="GO" id="GO:0009228">
    <property type="term" value="P:thiamine biosynthetic process"/>
    <property type="evidence" value="ECO:0007669"/>
    <property type="project" value="UniProtKB-KW"/>
</dbReference>
<dbReference type="GO" id="GO:0009229">
    <property type="term" value="P:thiamine diphosphate biosynthetic process"/>
    <property type="evidence" value="ECO:0007669"/>
    <property type="project" value="UniProtKB-UniRule"/>
</dbReference>
<dbReference type="CDD" id="cd01170">
    <property type="entry name" value="THZ_kinase"/>
    <property type="match status" value="1"/>
</dbReference>
<dbReference type="Gene3D" id="3.40.1190.20">
    <property type="match status" value="1"/>
</dbReference>
<dbReference type="HAMAP" id="MF_00228">
    <property type="entry name" value="Thz_kinase"/>
    <property type="match status" value="1"/>
</dbReference>
<dbReference type="InterPro" id="IPR000417">
    <property type="entry name" value="Hyethyz_kinase"/>
</dbReference>
<dbReference type="InterPro" id="IPR029056">
    <property type="entry name" value="Ribokinase-like"/>
</dbReference>
<dbReference type="NCBIfam" id="NF006830">
    <property type="entry name" value="PRK09355.1"/>
    <property type="match status" value="1"/>
</dbReference>
<dbReference type="NCBIfam" id="TIGR00694">
    <property type="entry name" value="thiM"/>
    <property type="match status" value="1"/>
</dbReference>
<dbReference type="Pfam" id="PF02110">
    <property type="entry name" value="HK"/>
    <property type="match status" value="1"/>
</dbReference>
<dbReference type="PIRSF" id="PIRSF000513">
    <property type="entry name" value="Thz_kinase"/>
    <property type="match status" value="1"/>
</dbReference>
<dbReference type="PRINTS" id="PR01099">
    <property type="entry name" value="HYETHTZKNASE"/>
</dbReference>
<dbReference type="SUPFAM" id="SSF53613">
    <property type="entry name" value="Ribokinase-like"/>
    <property type="match status" value="1"/>
</dbReference>
<evidence type="ECO:0000255" key="1">
    <source>
        <dbReference type="HAMAP-Rule" id="MF_00228"/>
    </source>
</evidence>
<feature type="chain" id="PRO_1000021536" description="Hydroxyethylthiazole kinase">
    <location>
        <begin position="1"/>
        <end position="263"/>
    </location>
</feature>
<feature type="binding site" evidence="1">
    <location>
        <position position="39"/>
    </location>
    <ligand>
        <name>substrate</name>
    </ligand>
</feature>
<feature type="binding site" evidence="1">
    <location>
        <position position="115"/>
    </location>
    <ligand>
        <name>ATP</name>
        <dbReference type="ChEBI" id="CHEBI:30616"/>
    </ligand>
</feature>
<feature type="binding site" evidence="1">
    <location>
        <position position="160"/>
    </location>
    <ligand>
        <name>ATP</name>
        <dbReference type="ChEBI" id="CHEBI:30616"/>
    </ligand>
</feature>
<feature type="binding site" evidence="1">
    <location>
        <position position="187"/>
    </location>
    <ligand>
        <name>substrate</name>
    </ligand>
</feature>
<keyword id="KW-0067">ATP-binding</keyword>
<keyword id="KW-0418">Kinase</keyword>
<keyword id="KW-0460">Magnesium</keyword>
<keyword id="KW-0479">Metal-binding</keyword>
<keyword id="KW-0547">Nucleotide-binding</keyword>
<keyword id="KW-1185">Reference proteome</keyword>
<keyword id="KW-0784">Thiamine biosynthesis</keyword>
<keyword id="KW-0808">Transferase</keyword>